<evidence type="ECO:0000255" key="1">
    <source>
        <dbReference type="PROSITE-ProRule" id="PRU00977"/>
    </source>
</evidence>
<evidence type="ECO:0000305" key="2"/>
<feature type="chain" id="PRO_1000063692" description="UPF0213 protein MGAS9429_Spy1198">
    <location>
        <begin position="1"/>
        <end position="92"/>
    </location>
</feature>
<feature type="domain" description="GIY-YIG" evidence="1">
    <location>
        <begin position="4"/>
        <end position="80"/>
    </location>
</feature>
<organism>
    <name type="scientific">Streptococcus pyogenes serotype M12 (strain MGAS9429)</name>
    <dbReference type="NCBI Taxonomy" id="370551"/>
    <lineage>
        <taxon>Bacteria</taxon>
        <taxon>Bacillati</taxon>
        <taxon>Bacillota</taxon>
        <taxon>Bacilli</taxon>
        <taxon>Lactobacillales</taxon>
        <taxon>Streptococcaceae</taxon>
        <taxon>Streptococcus</taxon>
    </lineage>
</organism>
<comment type="similarity">
    <text evidence="2">Belongs to the UPF0213 family.</text>
</comment>
<gene>
    <name type="ordered locus">MGAS9429_Spy1198</name>
</gene>
<dbReference type="EMBL" id="CP000259">
    <property type="protein sequence ID" value="ABF32385.1"/>
    <property type="molecule type" value="Genomic_DNA"/>
</dbReference>
<dbReference type="RefSeq" id="WP_002989164.1">
    <property type="nucleotide sequence ID" value="NC_008021.1"/>
</dbReference>
<dbReference type="SMR" id="Q1JL34"/>
<dbReference type="KEGG" id="spk:MGAS9429_Spy1198"/>
<dbReference type="HOGENOM" id="CLU_135650_0_3_9"/>
<dbReference type="Proteomes" id="UP000002433">
    <property type="component" value="Chromosome"/>
</dbReference>
<dbReference type="CDD" id="cd10456">
    <property type="entry name" value="GIY-YIG_UPF0213"/>
    <property type="match status" value="1"/>
</dbReference>
<dbReference type="Gene3D" id="3.40.1440.10">
    <property type="entry name" value="GIY-YIG endonuclease"/>
    <property type="match status" value="1"/>
</dbReference>
<dbReference type="InterPro" id="IPR000305">
    <property type="entry name" value="GIY-YIG_endonuc"/>
</dbReference>
<dbReference type="InterPro" id="IPR035901">
    <property type="entry name" value="GIY-YIG_endonuc_sf"/>
</dbReference>
<dbReference type="InterPro" id="IPR050190">
    <property type="entry name" value="UPF0213_domain"/>
</dbReference>
<dbReference type="PANTHER" id="PTHR34477">
    <property type="entry name" value="UPF0213 PROTEIN YHBQ"/>
    <property type="match status" value="1"/>
</dbReference>
<dbReference type="PANTHER" id="PTHR34477:SF1">
    <property type="entry name" value="UPF0213 PROTEIN YHBQ"/>
    <property type="match status" value="1"/>
</dbReference>
<dbReference type="Pfam" id="PF01541">
    <property type="entry name" value="GIY-YIG"/>
    <property type="match status" value="1"/>
</dbReference>
<dbReference type="SUPFAM" id="SSF82771">
    <property type="entry name" value="GIY-YIG endonuclease"/>
    <property type="match status" value="1"/>
</dbReference>
<dbReference type="PROSITE" id="PS50164">
    <property type="entry name" value="GIY_YIG"/>
    <property type="match status" value="1"/>
</dbReference>
<sequence length="92" mass="10735">MTTKKAYMYVLECVDKTLYTGYTTDLKKRLATHNAGKGAKYTRYRLPVSLLYYEVFDSKEAAMSAEALFKKRKTRSQKLAYIATHQKEKKNH</sequence>
<accession>Q1JL34</accession>
<proteinExistence type="inferred from homology"/>
<name>Y1198_STRPC</name>
<reference key="1">
    <citation type="journal article" date="2006" name="Proc. Natl. Acad. Sci. U.S.A.">
        <title>Molecular genetic anatomy of inter- and intraserotype variation in the human bacterial pathogen group A Streptococcus.</title>
        <authorList>
            <person name="Beres S.B."/>
            <person name="Richter E.W."/>
            <person name="Nagiec M.J."/>
            <person name="Sumby P."/>
            <person name="Porcella S.F."/>
            <person name="DeLeo F.R."/>
            <person name="Musser J.M."/>
        </authorList>
    </citation>
    <scope>NUCLEOTIDE SEQUENCE [LARGE SCALE GENOMIC DNA]</scope>
    <source>
        <strain>MGAS9429</strain>
    </source>
</reference>
<protein>
    <recommendedName>
        <fullName>UPF0213 protein MGAS9429_Spy1198</fullName>
    </recommendedName>
</protein>